<sequence>MLKVGVVGCGAIASLITKALMSDRLNKAEVLAFYDGNLEKAEKLAMETGADFCRSLDELVSKDLDLIVECASVTAVEDTVIKSLNNGKDVIIMSVGAFADKDLFLKLYKLAEKLERKIYIPSGAVAGIDAVKSGSLGKISDVTLTTTKPVHGLKNALEEQGLNTDEIKEPKTVFEGTVFEAISKFPQNINVSVVLSLASRYPAKVKIIADPCAVVNRHEIFVKGSIGTIKTCVENNPCRDNPKTSALAAYSVIRLIKDLSEPIRIGT</sequence>
<gene>
    <name evidence="1" type="primary">nadX</name>
    <name type="ordered locus">MmarC5_0845</name>
</gene>
<reference key="1">
    <citation type="submission" date="2007-03" db="EMBL/GenBank/DDBJ databases">
        <title>Complete sequence of chromosome of Methanococcus maripaludis C5.</title>
        <authorList>
            <consortium name="US DOE Joint Genome Institute"/>
            <person name="Copeland A."/>
            <person name="Lucas S."/>
            <person name="Lapidus A."/>
            <person name="Barry K."/>
            <person name="Glavina del Rio T."/>
            <person name="Dalin E."/>
            <person name="Tice H."/>
            <person name="Pitluck S."/>
            <person name="Chertkov O."/>
            <person name="Brettin T."/>
            <person name="Bruce D."/>
            <person name="Han C."/>
            <person name="Detter J.C."/>
            <person name="Schmutz J."/>
            <person name="Larimer F."/>
            <person name="Land M."/>
            <person name="Hauser L."/>
            <person name="Kyrpides N."/>
            <person name="Mikhailova N."/>
            <person name="Sieprawska-Lupa M."/>
            <person name="Whitman W.B."/>
            <person name="Richardson P."/>
        </authorList>
    </citation>
    <scope>NUCLEOTIDE SEQUENCE [LARGE SCALE GENOMIC DNA]</scope>
    <source>
        <strain>C5 / ATCC BAA-1333</strain>
    </source>
</reference>
<organism>
    <name type="scientific">Methanococcus maripaludis (strain C5 / ATCC BAA-1333)</name>
    <dbReference type="NCBI Taxonomy" id="402880"/>
    <lineage>
        <taxon>Archaea</taxon>
        <taxon>Methanobacteriati</taxon>
        <taxon>Methanobacteriota</taxon>
        <taxon>Methanomada group</taxon>
        <taxon>Methanococci</taxon>
        <taxon>Methanococcales</taxon>
        <taxon>Methanococcaceae</taxon>
        <taxon>Methanococcus</taxon>
    </lineage>
</organism>
<evidence type="ECO:0000255" key="1">
    <source>
        <dbReference type="HAMAP-Rule" id="MF_01265"/>
    </source>
</evidence>
<comment type="function">
    <text evidence="1">Specifically catalyzes the NAD or NADP-dependent dehydrogenation of L-aspartate to iminoaspartate.</text>
</comment>
<comment type="catalytic activity">
    <reaction evidence="1">
        <text>L-aspartate + NADP(+) + H2O = oxaloacetate + NH4(+) + NADPH + H(+)</text>
        <dbReference type="Rhea" id="RHEA:11784"/>
        <dbReference type="ChEBI" id="CHEBI:15377"/>
        <dbReference type="ChEBI" id="CHEBI:15378"/>
        <dbReference type="ChEBI" id="CHEBI:16452"/>
        <dbReference type="ChEBI" id="CHEBI:28938"/>
        <dbReference type="ChEBI" id="CHEBI:29991"/>
        <dbReference type="ChEBI" id="CHEBI:57783"/>
        <dbReference type="ChEBI" id="CHEBI:58349"/>
        <dbReference type="EC" id="1.4.1.21"/>
    </reaction>
</comment>
<comment type="catalytic activity">
    <reaction evidence="1">
        <text>L-aspartate + NAD(+) + H2O = oxaloacetate + NH4(+) + NADH + H(+)</text>
        <dbReference type="Rhea" id="RHEA:11788"/>
        <dbReference type="ChEBI" id="CHEBI:15377"/>
        <dbReference type="ChEBI" id="CHEBI:15378"/>
        <dbReference type="ChEBI" id="CHEBI:16452"/>
        <dbReference type="ChEBI" id="CHEBI:28938"/>
        <dbReference type="ChEBI" id="CHEBI:29991"/>
        <dbReference type="ChEBI" id="CHEBI:57540"/>
        <dbReference type="ChEBI" id="CHEBI:57945"/>
        <dbReference type="EC" id="1.4.1.21"/>
    </reaction>
</comment>
<comment type="pathway">
    <text evidence="1">Cofactor biosynthesis; NAD(+) biosynthesis; iminoaspartate from L-aspartate (dehydrogenase route): step 1/1.</text>
</comment>
<comment type="miscellaneous">
    <text evidence="1">The iminoaspartate product is unstable in aqueous solution and can decompose to oxaloacetate and ammonia.</text>
</comment>
<comment type="similarity">
    <text evidence="1">Belongs to the L-aspartate dehydrogenase family.</text>
</comment>
<feature type="chain" id="PRO_1000067306" description="L-aspartate dehydrogenase">
    <location>
        <begin position="1"/>
        <end position="267"/>
    </location>
</feature>
<feature type="active site" evidence="1">
    <location>
        <position position="218"/>
    </location>
</feature>
<feature type="binding site" evidence="1">
    <location>
        <position position="124"/>
    </location>
    <ligand>
        <name>NAD(+)</name>
        <dbReference type="ChEBI" id="CHEBI:57540"/>
    </ligand>
</feature>
<feature type="binding site" evidence="1">
    <location>
        <position position="190"/>
    </location>
    <ligand>
        <name>NAD(+)</name>
        <dbReference type="ChEBI" id="CHEBI:57540"/>
    </ligand>
</feature>
<keyword id="KW-0520">NAD</keyword>
<keyword id="KW-0521">NADP</keyword>
<keyword id="KW-0560">Oxidoreductase</keyword>
<keyword id="KW-0662">Pyridine nucleotide biosynthesis</keyword>
<accession>A4FY69</accession>
<proteinExistence type="inferred from homology"/>
<name>ASPD_METM5</name>
<protein>
    <recommendedName>
        <fullName evidence="1">L-aspartate dehydrogenase</fullName>
        <ecNumber evidence="1">1.4.1.21</ecNumber>
    </recommendedName>
</protein>
<dbReference type="EC" id="1.4.1.21" evidence="1"/>
<dbReference type="EMBL" id="CP000609">
    <property type="protein sequence ID" value="ABO35153.1"/>
    <property type="molecule type" value="Genomic_DNA"/>
</dbReference>
<dbReference type="RefSeq" id="WP_011868607.1">
    <property type="nucleotide sequence ID" value="NC_009135.1"/>
</dbReference>
<dbReference type="SMR" id="A4FY69"/>
<dbReference type="STRING" id="402880.MmarC5_0845"/>
<dbReference type="GeneID" id="4929041"/>
<dbReference type="KEGG" id="mmq:MmarC5_0845"/>
<dbReference type="eggNOG" id="arCOG00254">
    <property type="taxonomic scope" value="Archaea"/>
</dbReference>
<dbReference type="HOGENOM" id="CLU_089550_0_0_2"/>
<dbReference type="OrthoDB" id="15415at2157"/>
<dbReference type="UniPathway" id="UPA00253">
    <property type="reaction ID" value="UER00456"/>
</dbReference>
<dbReference type="Proteomes" id="UP000000253">
    <property type="component" value="Chromosome"/>
</dbReference>
<dbReference type="GO" id="GO:0033735">
    <property type="term" value="F:aspartate dehydrogenase activity"/>
    <property type="evidence" value="ECO:0007669"/>
    <property type="project" value="UniProtKB-EC"/>
</dbReference>
<dbReference type="GO" id="GO:0051287">
    <property type="term" value="F:NAD binding"/>
    <property type="evidence" value="ECO:0007669"/>
    <property type="project" value="UniProtKB-UniRule"/>
</dbReference>
<dbReference type="GO" id="GO:0050661">
    <property type="term" value="F:NADP binding"/>
    <property type="evidence" value="ECO:0007669"/>
    <property type="project" value="UniProtKB-UniRule"/>
</dbReference>
<dbReference type="GO" id="GO:0016639">
    <property type="term" value="F:oxidoreductase activity, acting on the CH-NH2 group of donors, NAD or NADP as acceptor"/>
    <property type="evidence" value="ECO:0007669"/>
    <property type="project" value="UniProtKB-UniRule"/>
</dbReference>
<dbReference type="GO" id="GO:0009435">
    <property type="term" value="P:NAD biosynthetic process"/>
    <property type="evidence" value="ECO:0007669"/>
    <property type="project" value="UniProtKB-UniRule"/>
</dbReference>
<dbReference type="Gene3D" id="3.30.360.10">
    <property type="entry name" value="Dihydrodipicolinate Reductase, domain 2"/>
    <property type="match status" value="1"/>
</dbReference>
<dbReference type="Gene3D" id="3.40.50.720">
    <property type="entry name" value="NAD(P)-binding Rossmann-like Domain"/>
    <property type="match status" value="1"/>
</dbReference>
<dbReference type="HAMAP" id="MF_01265">
    <property type="entry name" value="NadX"/>
    <property type="match status" value="1"/>
</dbReference>
<dbReference type="InterPro" id="IPR005106">
    <property type="entry name" value="Asp/hSer_DH_NAD-bd"/>
</dbReference>
<dbReference type="InterPro" id="IPR002811">
    <property type="entry name" value="Asp_DH"/>
</dbReference>
<dbReference type="InterPro" id="IPR022487">
    <property type="entry name" value="Asp_DH_arc"/>
</dbReference>
<dbReference type="InterPro" id="IPR020626">
    <property type="entry name" value="Asp_DH_prok"/>
</dbReference>
<dbReference type="InterPro" id="IPR011182">
    <property type="entry name" value="L-Asp_DH"/>
</dbReference>
<dbReference type="InterPro" id="IPR036291">
    <property type="entry name" value="NAD(P)-bd_dom_sf"/>
</dbReference>
<dbReference type="NCBIfam" id="TIGR03855">
    <property type="entry name" value="NAD_NadX"/>
    <property type="match status" value="1"/>
</dbReference>
<dbReference type="NCBIfam" id="NF009828">
    <property type="entry name" value="PRK13303.1-3"/>
    <property type="match status" value="1"/>
</dbReference>
<dbReference type="NCBIfam" id="NF009830">
    <property type="entry name" value="PRK13304.1"/>
    <property type="match status" value="1"/>
</dbReference>
<dbReference type="PANTHER" id="PTHR31873:SF6">
    <property type="entry name" value="ASPARTATE DEHYDROGENASE DOMAIN-CONTAINING PROTEIN"/>
    <property type="match status" value="1"/>
</dbReference>
<dbReference type="PANTHER" id="PTHR31873">
    <property type="entry name" value="L-ASPARTATE DEHYDROGENASE-RELATED"/>
    <property type="match status" value="1"/>
</dbReference>
<dbReference type="Pfam" id="PF01958">
    <property type="entry name" value="Asp_DH_C"/>
    <property type="match status" value="1"/>
</dbReference>
<dbReference type="Pfam" id="PF03447">
    <property type="entry name" value="NAD_binding_3"/>
    <property type="match status" value="1"/>
</dbReference>
<dbReference type="PIRSF" id="PIRSF005227">
    <property type="entry name" value="Asp_dh_NAD_syn"/>
    <property type="match status" value="1"/>
</dbReference>
<dbReference type="SUPFAM" id="SSF55347">
    <property type="entry name" value="Glyceraldehyde-3-phosphate dehydrogenase-like, C-terminal domain"/>
    <property type="match status" value="1"/>
</dbReference>
<dbReference type="SUPFAM" id="SSF51735">
    <property type="entry name" value="NAD(P)-binding Rossmann-fold domains"/>
    <property type="match status" value="1"/>
</dbReference>